<organism>
    <name type="scientific">Paraburkholderia phymatum (strain DSM 17167 / CIP 108236 / LMG 21445 / STM815)</name>
    <name type="common">Burkholderia phymatum</name>
    <dbReference type="NCBI Taxonomy" id="391038"/>
    <lineage>
        <taxon>Bacteria</taxon>
        <taxon>Pseudomonadati</taxon>
        <taxon>Pseudomonadota</taxon>
        <taxon>Betaproteobacteria</taxon>
        <taxon>Burkholderiales</taxon>
        <taxon>Burkholderiaceae</taxon>
        <taxon>Paraburkholderia</taxon>
    </lineage>
</organism>
<sequence length="264" mass="29592">MGQKIHPTGFRLAVSRNWASRWYANNNNFAAMLQEDIGVREYLKKKLKNASVGRVVIERPAKNARITIFSSRPGVVIGKKGEDIELLKSELQKRMGVPVHVNIEEIRKPETDAQLIADSITQQLERRIMFRRAMKRAMQNAMRLGAQGIKIMSAGRLNGIEIARTEWYREGRVPLHTLRADIDYATSEAKTTYGIIGVKVWVYKGDTLGRNDAPVVEEVAEEKRPRRNARPGDRRPRRDGEGAPAGARRGAPRRGGAGDGKTGE</sequence>
<keyword id="KW-1185">Reference proteome</keyword>
<keyword id="KW-0687">Ribonucleoprotein</keyword>
<keyword id="KW-0689">Ribosomal protein</keyword>
<keyword id="KW-0694">RNA-binding</keyword>
<keyword id="KW-0699">rRNA-binding</keyword>
<accession>B2JI60</accession>
<comment type="function">
    <text evidence="1">Binds the lower part of the 30S subunit head. Binds mRNA in the 70S ribosome, positioning it for translation.</text>
</comment>
<comment type="subunit">
    <text evidence="1">Part of the 30S ribosomal subunit. Forms a tight complex with proteins S10 and S14.</text>
</comment>
<comment type="similarity">
    <text evidence="1">Belongs to the universal ribosomal protein uS3 family.</text>
</comment>
<evidence type="ECO:0000255" key="1">
    <source>
        <dbReference type="HAMAP-Rule" id="MF_01309"/>
    </source>
</evidence>
<evidence type="ECO:0000256" key="2">
    <source>
        <dbReference type="SAM" id="MobiDB-lite"/>
    </source>
</evidence>
<evidence type="ECO:0000305" key="3"/>
<feature type="chain" id="PRO_1000140934" description="Small ribosomal subunit protein uS3">
    <location>
        <begin position="1"/>
        <end position="264"/>
    </location>
</feature>
<feature type="domain" description="KH type-2" evidence="1">
    <location>
        <begin position="39"/>
        <end position="107"/>
    </location>
</feature>
<feature type="region of interest" description="Disordered" evidence="2">
    <location>
        <begin position="217"/>
        <end position="264"/>
    </location>
</feature>
<feature type="compositionally biased region" description="Basic and acidic residues" evidence="2">
    <location>
        <begin position="230"/>
        <end position="241"/>
    </location>
</feature>
<feature type="compositionally biased region" description="Gly residues" evidence="2">
    <location>
        <begin position="253"/>
        <end position="264"/>
    </location>
</feature>
<gene>
    <name evidence="1" type="primary">rpsC</name>
    <name type="ordered locus">Bphy_2834</name>
</gene>
<protein>
    <recommendedName>
        <fullName evidence="1">Small ribosomal subunit protein uS3</fullName>
    </recommendedName>
    <alternativeName>
        <fullName evidence="3">30S ribosomal protein S3</fullName>
    </alternativeName>
</protein>
<reference key="1">
    <citation type="journal article" date="2014" name="Stand. Genomic Sci.">
        <title>Complete genome sequence of Burkholderia phymatum STM815(T), a broad host range and efficient nitrogen-fixing symbiont of Mimosa species.</title>
        <authorList>
            <person name="Moulin L."/>
            <person name="Klonowska A."/>
            <person name="Caroline B."/>
            <person name="Booth K."/>
            <person name="Vriezen J.A."/>
            <person name="Melkonian R."/>
            <person name="James E.K."/>
            <person name="Young J.P."/>
            <person name="Bena G."/>
            <person name="Hauser L."/>
            <person name="Land M."/>
            <person name="Kyrpides N."/>
            <person name="Bruce D."/>
            <person name="Chain P."/>
            <person name="Copeland A."/>
            <person name="Pitluck S."/>
            <person name="Woyke T."/>
            <person name="Lizotte-Waniewski M."/>
            <person name="Bristow J."/>
            <person name="Riley M."/>
        </authorList>
    </citation>
    <scope>NUCLEOTIDE SEQUENCE [LARGE SCALE GENOMIC DNA]</scope>
    <source>
        <strain>DSM 17167 / CIP 108236 / LMG 21445 / STM815</strain>
    </source>
</reference>
<name>RS3_PARP8</name>
<proteinExistence type="inferred from homology"/>
<dbReference type="EMBL" id="CP001043">
    <property type="protein sequence ID" value="ACC72006.1"/>
    <property type="molecule type" value="Genomic_DNA"/>
</dbReference>
<dbReference type="RefSeq" id="WP_012402193.1">
    <property type="nucleotide sequence ID" value="NZ_CADFGH010000028.1"/>
</dbReference>
<dbReference type="SMR" id="B2JI60"/>
<dbReference type="STRING" id="391038.Bphy_2834"/>
<dbReference type="GeneID" id="69968026"/>
<dbReference type="KEGG" id="bph:Bphy_2834"/>
<dbReference type="eggNOG" id="COG0092">
    <property type="taxonomic scope" value="Bacteria"/>
</dbReference>
<dbReference type="HOGENOM" id="CLU_058591_0_2_4"/>
<dbReference type="OrthoDB" id="9806396at2"/>
<dbReference type="Proteomes" id="UP000001192">
    <property type="component" value="Chromosome 1"/>
</dbReference>
<dbReference type="GO" id="GO:0022627">
    <property type="term" value="C:cytosolic small ribosomal subunit"/>
    <property type="evidence" value="ECO:0007669"/>
    <property type="project" value="TreeGrafter"/>
</dbReference>
<dbReference type="GO" id="GO:0003729">
    <property type="term" value="F:mRNA binding"/>
    <property type="evidence" value="ECO:0007669"/>
    <property type="project" value="UniProtKB-UniRule"/>
</dbReference>
<dbReference type="GO" id="GO:0019843">
    <property type="term" value="F:rRNA binding"/>
    <property type="evidence" value="ECO:0007669"/>
    <property type="project" value="UniProtKB-UniRule"/>
</dbReference>
<dbReference type="GO" id="GO:0003735">
    <property type="term" value="F:structural constituent of ribosome"/>
    <property type="evidence" value="ECO:0007669"/>
    <property type="project" value="InterPro"/>
</dbReference>
<dbReference type="GO" id="GO:0006412">
    <property type="term" value="P:translation"/>
    <property type="evidence" value="ECO:0007669"/>
    <property type="project" value="UniProtKB-UniRule"/>
</dbReference>
<dbReference type="CDD" id="cd02412">
    <property type="entry name" value="KH-II_30S_S3"/>
    <property type="match status" value="1"/>
</dbReference>
<dbReference type="FunFam" id="3.30.1140.32:FF:000006">
    <property type="entry name" value="30S ribosomal protein S3"/>
    <property type="match status" value="1"/>
</dbReference>
<dbReference type="FunFam" id="3.30.300.20:FF:000001">
    <property type="entry name" value="30S ribosomal protein S3"/>
    <property type="match status" value="1"/>
</dbReference>
<dbReference type="Gene3D" id="3.30.300.20">
    <property type="match status" value="1"/>
</dbReference>
<dbReference type="Gene3D" id="3.30.1140.32">
    <property type="entry name" value="Ribosomal protein S3, C-terminal domain"/>
    <property type="match status" value="1"/>
</dbReference>
<dbReference type="HAMAP" id="MF_01309_B">
    <property type="entry name" value="Ribosomal_uS3_B"/>
    <property type="match status" value="1"/>
</dbReference>
<dbReference type="InterPro" id="IPR004087">
    <property type="entry name" value="KH_dom"/>
</dbReference>
<dbReference type="InterPro" id="IPR015946">
    <property type="entry name" value="KH_dom-like_a/b"/>
</dbReference>
<dbReference type="InterPro" id="IPR004044">
    <property type="entry name" value="KH_dom_type_2"/>
</dbReference>
<dbReference type="InterPro" id="IPR009019">
    <property type="entry name" value="KH_sf_prok-type"/>
</dbReference>
<dbReference type="InterPro" id="IPR036419">
    <property type="entry name" value="Ribosomal_S3_C_sf"/>
</dbReference>
<dbReference type="InterPro" id="IPR005704">
    <property type="entry name" value="Ribosomal_uS3_bac-typ"/>
</dbReference>
<dbReference type="InterPro" id="IPR001351">
    <property type="entry name" value="Ribosomal_uS3_C"/>
</dbReference>
<dbReference type="InterPro" id="IPR018280">
    <property type="entry name" value="Ribosomal_uS3_CS"/>
</dbReference>
<dbReference type="NCBIfam" id="TIGR01009">
    <property type="entry name" value="rpsC_bact"/>
    <property type="match status" value="1"/>
</dbReference>
<dbReference type="PANTHER" id="PTHR11760">
    <property type="entry name" value="30S/40S RIBOSOMAL PROTEIN S3"/>
    <property type="match status" value="1"/>
</dbReference>
<dbReference type="PANTHER" id="PTHR11760:SF19">
    <property type="entry name" value="SMALL RIBOSOMAL SUBUNIT PROTEIN US3C"/>
    <property type="match status" value="1"/>
</dbReference>
<dbReference type="Pfam" id="PF07650">
    <property type="entry name" value="KH_2"/>
    <property type="match status" value="1"/>
</dbReference>
<dbReference type="Pfam" id="PF00189">
    <property type="entry name" value="Ribosomal_S3_C"/>
    <property type="match status" value="1"/>
</dbReference>
<dbReference type="SMART" id="SM00322">
    <property type="entry name" value="KH"/>
    <property type="match status" value="1"/>
</dbReference>
<dbReference type="SUPFAM" id="SSF54814">
    <property type="entry name" value="Prokaryotic type KH domain (KH-domain type II)"/>
    <property type="match status" value="1"/>
</dbReference>
<dbReference type="SUPFAM" id="SSF54821">
    <property type="entry name" value="Ribosomal protein S3 C-terminal domain"/>
    <property type="match status" value="1"/>
</dbReference>
<dbReference type="PROSITE" id="PS50823">
    <property type="entry name" value="KH_TYPE_2"/>
    <property type="match status" value="1"/>
</dbReference>
<dbReference type="PROSITE" id="PS00548">
    <property type="entry name" value="RIBOSOMAL_S3"/>
    <property type="match status" value="1"/>
</dbReference>